<accession>A5GPX5</accession>
<organism>
    <name type="scientific">Synechococcus sp. (strain RCC307)</name>
    <dbReference type="NCBI Taxonomy" id="316278"/>
    <lineage>
        <taxon>Bacteria</taxon>
        <taxon>Bacillati</taxon>
        <taxon>Cyanobacteriota</taxon>
        <taxon>Cyanophyceae</taxon>
        <taxon>Synechococcales</taxon>
        <taxon>Synechococcaceae</taxon>
        <taxon>Synechococcus</taxon>
    </lineage>
</organism>
<evidence type="ECO:0000255" key="1">
    <source>
        <dbReference type="HAMAP-Rule" id="MF_00141"/>
    </source>
</evidence>
<gene>
    <name evidence="1" type="primary">efp</name>
    <name type="ordered locus">SynRCC307_0031</name>
</gene>
<sequence length="186" mass="20469">MISSNDFRTGTTIELDGQVWRVVEFLHVKPGKGSAFVRTKLKSAQSGNVVEKTFRAGEMVASALLEKSTLQHTYMEGEDFVFMDMASYEETRLTAKQIGEGRKYLKEGMEVNVVSWKDNPIEVELPNSVVLEVTETDPGVKGDTATGGTKPAIVETGAQVMVPLFISIGEKIKIDTRSDSYLGRES</sequence>
<proteinExistence type="inferred from homology"/>
<keyword id="KW-0963">Cytoplasm</keyword>
<keyword id="KW-0251">Elongation factor</keyword>
<keyword id="KW-0648">Protein biosynthesis</keyword>
<keyword id="KW-1185">Reference proteome</keyword>
<feature type="chain" id="PRO_1000010885" description="Elongation factor P">
    <location>
        <begin position="1"/>
        <end position="186"/>
    </location>
</feature>
<reference key="1">
    <citation type="submission" date="2006-05" db="EMBL/GenBank/DDBJ databases">
        <authorList>
            <consortium name="Genoscope"/>
        </authorList>
    </citation>
    <scope>NUCLEOTIDE SEQUENCE [LARGE SCALE GENOMIC DNA]</scope>
    <source>
        <strain>RCC307</strain>
    </source>
</reference>
<comment type="function">
    <text evidence="1">Involved in peptide bond synthesis. Stimulates efficient translation and peptide-bond synthesis on native or reconstituted 70S ribosomes in vitro. Probably functions indirectly by altering the affinity of the ribosome for aminoacyl-tRNA, thus increasing their reactivity as acceptors for peptidyl transferase.</text>
</comment>
<comment type="pathway">
    <text evidence="1">Protein biosynthesis; polypeptide chain elongation.</text>
</comment>
<comment type="subcellular location">
    <subcellularLocation>
        <location evidence="1">Cytoplasm</location>
    </subcellularLocation>
</comment>
<comment type="similarity">
    <text evidence="1">Belongs to the elongation factor P family.</text>
</comment>
<name>EFP_SYNR3</name>
<protein>
    <recommendedName>
        <fullName evidence="1">Elongation factor P</fullName>
        <shortName evidence="1">EF-P</shortName>
    </recommendedName>
</protein>
<dbReference type="EMBL" id="CT978603">
    <property type="protein sequence ID" value="CAK26934.1"/>
    <property type="molecule type" value="Genomic_DNA"/>
</dbReference>
<dbReference type="SMR" id="A5GPX5"/>
<dbReference type="STRING" id="316278.SynRCC307_0031"/>
<dbReference type="KEGG" id="syr:SynRCC307_0031"/>
<dbReference type="eggNOG" id="COG0231">
    <property type="taxonomic scope" value="Bacteria"/>
</dbReference>
<dbReference type="HOGENOM" id="CLU_074944_0_1_3"/>
<dbReference type="OrthoDB" id="9801844at2"/>
<dbReference type="UniPathway" id="UPA00345"/>
<dbReference type="Proteomes" id="UP000001115">
    <property type="component" value="Chromosome"/>
</dbReference>
<dbReference type="GO" id="GO:0005737">
    <property type="term" value="C:cytoplasm"/>
    <property type="evidence" value="ECO:0007669"/>
    <property type="project" value="UniProtKB-SubCell"/>
</dbReference>
<dbReference type="GO" id="GO:0003746">
    <property type="term" value="F:translation elongation factor activity"/>
    <property type="evidence" value="ECO:0007669"/>
    <property type="project" value="UniProtKB-UniRule"/>
</dbReference>
<dbReference type="GO" id="GO:0043043">
    <property type="term" value="P:peptide biosynthetic process"/>
    <property type="evidence" value="ECO:0007669"/>
    <property type="project" value="InterPro"/>
</dbReference>
<dbReference type="CDD" id="cd04470">
    <property type="entry name" value="S1_EF-P_repeat_1"/>
    <property type="match status" value="1"/>
</dbReference>
<dbReference type="CDD" id="cd05794">
    <property type="entry name" value="S1_EF-P_repeat_2"/>
    <property type="match status" value="1"/>
</dbReference>
<dbReference type="FunFam" id="2.30.30.30:FF:000003">
    <property type="entry name" value="Elongation factor P"/>
    <property type="match status" value="1"/>
</dbReference>
<dbReference type="FunFam" id="2.40.50.140:FF:000004">
    <property type="entry name" value="Elongation factor P"/>
    <property type="match status" value="1"/>
</dbReference>
<dbReference type="FunFam" id="2.40.50.140:FF:000009">
    <property type="entry name" value="Elongation factor P"/>
    <property type="match status" value="1"/>
</dbReference>
<dbReference type="Gene3D" id="2.30.30.30">
    <property type="match status" value="1"/>
</dbReference>
<dbReference type="Gene3D" id="2.40.50.140">
    <property type="entry name" value="Nucleic acid-binding proteins"/>
    <property type="match status" value="2"/>
</dbReference>
<dbReference type="HAMAP" id="MF_00141">
    <property type="entry name" value="EF_P"/>
    <property type="match status" value="1"/>
</dbReference>
<dbReference type="InterPro" id="IPR015365">
    <property type="entry name" value="Elong-fact-P_C"/>
</dbReference>
<dbReference type="InterPro" id="IPR012340">
    <property type="entry name" value="NA-bd_OB-fold"/>
</dbReference>
<dbReference type="InterPro" id="IPR014722">
    <property type="entry name" value="Rib_uL2_dom2"/>
</dbReference>
<dbReference type="InterPro" id="IPR020599">
    <property type="entry name" value="Transl_elong_fac_P/YeiP"/>
</dbReference>
<dbReference type="InterPro" id="IPR013185">
    <property type="entry name" value="Transl_elong_KOW-like"/>
</dbReference>
<dbReference type="InterPro" id="IPR001059">
    <property type="entry name" value="Transl_elong_P/YeiP_cen"/>
</dbReference>
<dbReference type="InterPro" id="IPR013852">
    <property type="entry name" value="Transl_elong_P/YeiP_CS"/>
</dbReference>
<dbReference type="InterPro" id="IPR011768">
    <property type="entry name" value="Transl_elongation_fac_P"/>
</dbReference>
<dbReference type="InterPro" id="IPR008991">
    <property type="entry name" value="Translation_prot_SH3-like_sf"/>
</dbReference>
<dbReference type="NCBIfam" id="TIGR00038">
    <property type="entry name" value="efp"/>
    <property type="match status" value="1"/>
</dbReference>
<dbReference type="NCBIfam" id="NF001810">
    <property type="entry name" value="PRK00529.1"/>
    <property type="match status" value="1"/>
</dbReference>
<dbReference type="PANTHER" id="PTHR30053">
    <property type="entry name" value="ELONGATION FACTOR P"/>
    <property type="match status" value="1"/>
</dbReference>
<dbReference type="PANTHER" id="PTHR30053:SF12">
    <property type="entry name" value="ELONGATION FACTOR P (EF-P) FAMILY PROTEIN"/>
    <property type="match status" value="1"/>
</dbReference>
<dbReference type="Pfam" id="PF01132">
    <property type="entry name" value="EFP"/>
    <property type="match status" value="1"/>
</dbReference>
<dbReference type="Pfam" id="PF08207">
    <property type="entry name" value="EFP_N"/>
    <property type="match status" value="1"/>
</dbReference>
<dbReference type="Pfam" id="PF09285">
    <property type="entry name" value="Elong-fact-P_C"/>
    <property type="match status" value="1"/>
</dbReference>
<dbReference type="PIRSF" id="PIRSF005901">
    <property type="entry name" value="EF-P"/>
    <property type="match status" value="1"/>
</dbReference>
<dbReference type="SMART" id="SM01185">
    <property type="entry name" value="EFP"/>
    <property type="match status" value="1"/>
</dbReference>
<dbReference type="SMART" id="SM00841">
    <property type="entry name" value="Elong-fact-P_C"/>
    <property type="match status" value="1"/>
</dbReference>
<dbReference type="SUPFAM" id="SSF50249">
    <property type="entry name" value="Nucleic acid-binding proteins"/>
    <property type="match status" value="2"/>
</dbReference>
<dbReference type="SUPFAM" id="SSF50104">
    <property type="entry name" value="Translation proteins SH3-like domain"/>
    <property type="match status" value="1"/>
</dbReference>
<dbReference type="PROSITE" id="PS01275">
    <property type="entry name" value="EFP"/>
    <property type="match status" value="1"/>
</dbReference>